<organism>
    <name type="scientific">Rubrobacter xylanophilus (strain DSM 9941 / JCM 11954 / NBRC 16129 / PRD-1)</name>
    <dbReference type="NCBI Taxonomy" id="266117"/>
    <lineage>
        <taxon>Bacteria</taxon>
        <taxon>Bacillati</taxon>
        <taxon>Actinomycetota</taxon>
        <taxon>Rubrobacteria</taxon>
        <taxon>Rubrobacterales</taxon>
        <taxon>Rubrobacteraceae</taxon>
        <taxon>Rubrobacter</taxon>
    </lineage>
</organism>
<reference key="1">
    <citation type="submission" date="2006-06" db="EMBL/GenBank/DDBJ databases">
        <title>Complete sequence of Rubrobacter xylanophilus DSM 9941.</title>
        <authorList>
            <consortium name="US DOE Joint Genome Institute"/>
            <person name="Copeland A."/>
            <person name="Lucas S."/>
            <person name="Lapidus A."/>
            <person name="Barry K."/>
            <person name="Detter J.C."/>
            <person name="Glavina del Rio T."/>
            <person name="Hammon N."/>
            <person name="Israni S."/>
            <person name="Dalin E."/>
            <person name="Tice H."/>
            <person name="Pitluck S."/>
            <person name="Munk A.C."/>
            <person name="Brettin T."/>
            <person name="Bruce D."/>
            <person name="Han C."/>
            <person name="Tapia R."/>
            <person name="Gilna P."/>
            <person name="Schmutz J."/>
            <person name="Larimer F."/>
            <person name="Land M."/>
            <person name="Hauser L."/>
            <person name="Kyrpides N."/>
            <person name="Lykidis A."/>
            <person name="da Costa M.S."/>
            <person name="Rainey F.A."/>
            <person name="Empadinhas N."/>
            <person name="Jolivet E."/>
            <person name="Battista J.R."/>
            <person name="Richardson P."/>
        </authorList>
    </citation>
    <scope>NUCLEOTIDE SEQUENCE [LARGE SCALE GENOMIC DNA]</scope>
    <source>
        <strain>DSM 9941 / JCM 11954 / NBRC 16129 / PRD-1</strain>
    </source>
</reference>
<dbReference type="EC" id="5.4.99.62" evidence="1"/>
<dbReference type="EMBL" id="CP000386">
    <property type="protein sequence ID" value="ABG04842.1"/>
    <property type="molecule type" value="Genomic_DNA"/>
</dbReference>
<dbReference type="RefSeq" id="WP_011564858.1">
    <property type="nucleotide sequence ID" value="NC_008148.1"/>
</dbReference>
<dbReference type="SMR" id="Q1AUT6"/>
<dbReference type="STRING" id="266117.Rxyl_1892"/>
<dbReference type="KEGG" id="rxy:Rxyl_1892"/>
<dbReference type="eggNOG" id="COG1869">
    <property type="taxonomic scope" value="Bacteria"/>
</dbReference>
<dbReference type="HOGENOM" id="CLU_135498_0_0_11"/>
<dbReference type="OrthoDB" id="9805009at2"/>
<dbReference type="PhylomeDB" id="Q1AUT6"/>
<dbReference type="UniPathway" id="UPA00916">
    <property type="reaction ID" value="UER00888"/>
</dbReference>
<dbReference type="Proteomes" id="UP000006637">
    <property type="component" value="Chromosome"/>
</dbReference>
<dbReference type="GO" id="GO:0005829">
    <property type="term" value="C:cytosol"/>
    <property type="evidence" value="ECO:0007669"/>
    <property type="project" value="TreeGrafter"/>
</dbReference>
<dbReference type="GO" id="GO:0062193">
    <property type="term" value="F:D-ribose pyranase activity"/>
    <property type="evidence" value="ECO:0007669"/>
    <property type="project" value="UniProtKB-EC"/>
</dbReference>
<dbReference type="GO" id="GO:0016872">
    <property type="term" value="F:intramolecular lyase activity"/>
    <property type="evidence" value="ECO:0007669"/>
    <property type="project" value="UniProtKB-UniRule"/>
</dbReference>
<dbReference type="GO" id="GO:0048029">
    <property type="term" value="F:monosaccharide binding"/>
    <property type="evidence" value="ECO:0007669"/>
    <property type="project" value="InterPro"/>
</dbReference>
<dbReference type="GO" id="GO:0019303">
    <property type="term" value="P:D-ribose catabolic process"/>
    <property type="evidence" value="ECO:0007669"/>
    <property type="project" value="UniProtKB-UniRule"/>
</dbReference>
<dbReference type="Gene3D" id="3.40.1650.10">
    <property type="entry name" value="RbsD-like domain"/>
    <property type="match status" value="1"/>
</dbReference>
<dbReference type="HAMAP" id="MF_01661">
    <property type="entry name" value="D_rib_pyranase"/>
    <property type="match status" value="1"/>
</dbReference>
<dbReference type="InterPro" id="IPR023064">
    <property type="entry name" value="D-ribose_pyranase"/>
</dbReference>
<dbReference type="InterPro" id="IPR023750">
    <property type="entry name" value="RbsD-like_sf"/>
</dbReference>
<dbReference type="InterPro" id="IPR007721">
    <property type="entry name" value="RbsD_FucU"/>
</dbReference>
<dbReference type="NCBIfam" id="NF008761">
    <property type="entry name" value="PRK11797.1"/>
    <property type="match status" value="1"/>
</dbReference>
<dbReference type="PANTHER" id="PTHR37831">
    <property type="entry name" value="D-RIBOSE PYRANASE"/>
    <property type="match status" value="1"/>
</dbReference>
<dbReference type="PANTHER" id="PTHR37831:SF1">
    <property type="entry name" value="D-RIBOSE PYRANASE"/>
    <property type="match status" value="1"/>
</dbReference>
<dbReference type="Pfam" id="PF05025">
    <property type="entry name" value="RbsD_FucU"/>
    <property type="match status" value="1"/>
</dbReference>
<dbReference type="SUPFAM" id="SSF102546">
    <property type="entry name" value="RbsD-like"/>
    <property type="match status" value="1"/>
</dbReference>
<evidence type="ECO:0000255" key="1">
    <source>
        <dbReference type="HAMAP-Rule" id="MF_01661"/>
    </source>
</evidence>
<keyword id="KW-0119">Carbohydrate metabolism</keyword>
<keyword id="KW-0963">Cytoplasm</keyword>
<keyword id="KW-0413">Isomerase</keyword>
<keyword id="KW-1185">Reference proteome</keyword>
<feature type="chain" id="PRO_0000346247" description="D-ribose pyranase 2">
    <location>
        <begin position="1"/>
        <end position="154"/>
    </location>
</feature>
<feature type="active site" description="Proton donor" evidence="1">
    <location>
        <position position="20"/>
    </location>
</feature>
<feature type="binding site" evidence="1">
    <location>
        <position position="28"/>
    </location>
    <ligand>
        <name>substrate</name>
    </ligand>
</feature>
<feature type="binding site" evidence="1">
    <location>
        <position position="98"/>
    </location>
    <ligand>
        <name>substrate</name>
    </ligand>
</feature>
<feature type="binding site" evidence="1">
    <location>
        <begin position="121"/>
        <end position="123"/>
    </location>
    <ligand>
        <name>substrate</name>
    </ligand>
</feature>
<name>RBSD2_RUBXD</name>
<protein>
    <recommendedName>
        <fullName evidence="1">D-ribose pyranase 2</fullName>
        <ecNumber evidence="1">5.4.99.62</ecNumber>
    </recommendedName>
</protein>
<proteinExistence type="inferred from homology"/>
<accession>Q1AUT6</accession>
<sequence length="154" mass="17118">MKRSGILNQPLSNILASFGHTDLLVVCDAGFPIPRDAQRVDLAIAPDLPDLRTVLSLINEEFITEKVVIAEEMAEFNPPLHGWLQKHFSGVEFERRPHEEMLTQVATSAKAIVRTGAFDPWGNIGLVSGVDVERFFAKEGTVLPDYYRDRAGEA</sequence>
<gene>
    <name evidence="1" type="primary">rbsD2</name>
    <name type="ordered locus">Rxyl_1892</name>
</gene>
<comment type="function">
    <text evidence="1">Catalyzes the interconversion of beta-pyran and beta-furan forms of D-ribose.</text>
</comment>
<comment type="catalytic activity">
    <reaction evidence="1">
        <text>beta-D-ribopyranose = beta-D-ribofuranose</text>
        <dbReference type="Rhea" id="RHEA:25432"/>
        <dbReference type="ChEBI" id="CHEBI:27476"/>
        <dbReference type="ChEBI" id="CHEBI:47002"/>
        <dbReference type="EC" id="5.4.99.62"/>
    </reaction>
</comment>
<comment type="pathway">
    <text evidence="1">Carbohydrate metabolism; D-ribose degradation; D-ribose 5-phosphate from beta-D-ribopyranose: step 1/2.</text>
</comment>
<comment type="subunit">
    <text evidence="1">Homodecamer.</text>
</comment>
<comment type="subcellular location">
    <subcellularLocation>
        <location evidence="1">Cytoplasm</location>
    </subcellularLocation>
</comment>
<comment type="similarity">
    <text evidence="1">Belongs to the RbsD / FucU family. RbsD subfamily.</text>
</comment>